<feature type="peptide" id="PRO_0000019778" description="Neuromedin-U-25">
    <location>
        <begin position="1"/>
        <end position="25"/>
    </location>
</feature>
<feature type="peptide" id="PRO_0000019779" description="Neuromedin-U-8">
    <location>
        <begin position="18"/>
        <end position="25"/>
    </location>
</feature>
<feature type="modified residue" description="Asparagine amide" evidence="1">
    <location>
        <position position="25"/>
    </location>
</feature>
<comment type="function">
    <text>Stimulates uterine smooth muscle contraction and causes selective vasoconstriction.</text>
</comment>
<comment type="subcellular location">
    <subcellularLocation>
        <location>Secreted</location>
    </subcellularLocation>
</comment>
<comment type="similarity">
    <text evidence="2">Belongs to the NmU family.</text>
</comment>
<evidence type="ECO:0000269" key="1">
    <source>
    </source>
</evidence>
<evidence type="ECO:0000305" key="2"/>
<reference key="1">
    <citation type="journal article" date="1985" name="Biochem. Biophys. Res. Commun.">
        <title>Neuromedin U-8 and U-25: novel uterus stimulating and hypertensive peptides identified in porcine spinal cord.</title>
        <authorList>
            <person name="Minamino N."/>
            <person name="Kangawa K."/>
            <person name="Matsuo H."/>
        </authorList>
    </citation>
    <scope>PROTEIN SEQUENCE</scope>
    <scope>AMIDATION AT ASN-25</scope>
    <source>
        <tissue>Spinal cord</tissue>
    </source>
</reference>
<protein>
    <recommendedName>
        <fullName>Neuromedin-U-25</fullName>
        <shortName>NmU-25</shortName>
    </recommendedName>
    <component>
        <recommendedName>
            <fullName>Neuromedin-U-8</fullName>
            <shortName>NmU-8</shortName>
        </recommendedName>
    </component>
</protein>
<keyword id="KW-0027">Amidation</keyword>
<keyword id="KW-0165">Cleavage on pair of basic residues</keyword>
<keyword id="KW-0903">Direct protein sequencing</keyword>
<keyword id="KW-0372">Hormone</keyword>
<keyword id="KW-1185">Reference proteome</keyword>
<keyword id="KW-0964">Secreted</keyword>
<gene>
    <name type="primary">NMU</name>
</gene>
<dbReference type="SMR" id="P34964"/>
<dbReference type="STRING" id="9823.ENSSSCP00000053008"/>
<dbReference type="PaxDb" id="9823-ENSSSCP00000025674"/>
<dbReference type="eggNOG" id="ENOG502S1QB">
    <property type="taxonomic scope" value="Eukaryota"/>
</dbReference>
<dbReference type="HOGENOM" id="CLU_221025_0_0_1"/>
<dbReference type="InParanoid" id="P34964"/>
<dbReference type="Proteomes" id="UP000008227">
    <property type="component" value="Unplaced"/>
</dbReference>
<dbReference type="Proteomes" id="UP000314985">
    <property type="component" value="Unplaced"/>
</dbReference>
<dbReference type="Proteomes" id="UP000694570">
    <property type="component" value="Unplaced"/>
</dbReference>
<dbReference type="Proteomes" id="UP000694571">
    <property type="component" value="Unplaced"/>
</dbReference>
<dbReference type="Proteomes" id="UP000694720">
    <property type="component" value="Unplaced"/>
</dbReference>
<dbReference type="Proteomes" id="UP000694722">
    <property type="component" value="Unplaced"/>
</dbReference>
<dbReference type="Proteomes" id="UP000694723">
    <property type="component" value="Unplaced"/>
</dbReference>
<dbReference type="Proteomes" id="UP000694724">
    <property type="component" value="Unplaced"/>
</dbReference>
<dbReference type="Proteomes" id="UP000694725">
    <property type="component" value="Unplaced"/>
</dbReference>
<dbReference type="Proteomes" id="UP000694726">
    <property type="component" value="Unplaced"/>
</dbReference>
<dbReference type="Proteomes" id="UP000694727">
    <property type="component" value="Unplaced"/>
</dbReference>
<dbReference type="Proteomes" id="UP000694728">
    <property type="component" value="Unplaced"/>
</dbReference>
<dbReference type="GO" id="GO:0005576">
    <property type="term" value="C:extracellular region"/>
    <property type="evidence" value="ECO:0007669"/>
    <property type="project" value="UniProtKB-SubCell"/>
</dbReference>
<dbReference type="GO" id="GO:0005179">
    <property type="term" value="F:hormone activity"/>
    <property type="evidence" value="ECO:0007669"/>
    <property type="project" value="UniProtKB-KW"/>
</dbReference>
<dbReference type="GO" id="GO:0006940">
    <property type="term" value="P:regulation of smooth muscle contraction"/>
    <property type="evidence" value="ECO:0007669"/>
    <property type="project" value="InterPro"/>
</dbReference>
<dbReference type="InterPro" id="IPR018070">
    <property type="entry name" value="Neuromedin-U_amidation-site"/>
</dbReference>
<dbReference type="InterPro" id="IPR008200">
    <property type="entry name" value="NMU_C"/>
</dbReference>
<dbReference type="Pfam" id="PF02070">
    <property type="entry name" value="NMU"/>
    <property type="match status" value="1"/>
</dbReference>
<dbReference type="SMART" id="SM00084">
    <property type="entry name" value="NMU"/>
    <property type="match status" value="1"/>
</dbReference>
<dbReference type="PROSITE" id="PS00967">
    <property type="entry name" value="NMU"/>
    <property type="match status" value="1"/>
</dbReference>
<sequence length="25" mass="3144">FKVDEEFQGPIVSQNRRYFLFRPRN</sequence>
<organism>
    <name type="scientific">Sus scrofa</name>
    <name type="common">Pig</name>
    <dbReference type="NCBI Taxonomy" id="9823"/>
    <lineage>
        <taxon>Eukaryota</taxon>
        <taxon>Metazoa</taxon>
        <taxon>Chordata</taxon>
        <taxon>Craniata</taxon>
        <taxon>Vertebrata</taxon>
        <taxon>Euteleostomi</taxon>
        <taxon>Mammalia</taxon>
        <taxon>Eutheria</taxon>
        <taxon>Laurasiatheria</taxon>
        <taxon>Artiodactyla</taxon>
        <taxon>Suina</taxon>
        <taxon>Suidae</taxon>
        <taxon>Sus</taxon>
    </lineage>
</organism>
<name>NMU_PIG</name>
<proteinExistence type="evidence at protein level"/>
<accession>P34964</accession>